<proteinExistence type="evidence at protein level"/>
<protein>
    <recommendedName>
        <fullName evidence="5">Asp/Glu-specific dipeptidyl-peptidase</fullName>
        <ecNumber evidence="4">3.4.14.-</ecNumber>
    </recommendedName>
    <alternativeName>
        <fullName evidence="5">Dipeptidyl-peptidase 11</fullName>
        <shortName evidence="5">DPP11</shortName>
    </alternativeName>
</protein>
<comment type="function">
    <text evidence="4">Catalyzes the removal of dipeptides from the N-terminus of oligopeptides. Shows a strict specificity for acidic residues (Asp or Glu) in the P1 position, and has probably a hydrophobic residue preference at the P2 position. Preferentially cleaves the synthetic substrate Leu-Asp-methylcoumaryl-7-amide (Leu-Asp-MCA) as compared to Leu-Glu-MCA.</text>
</comment>
<comment type="similarity">
    <text evidence="6">Belongs to the peptidase S46 family.</text>
</comment>
<name>DPP11_CAPGI</name>
<keyword id="KW-0031">Aminopeptidase</keyword>
<keyword id="KW-0378">Hydrolase</keyword>
<keyword id="KW-0645">Protease</keyword>
<keyword id="KW-0720">Serine protease</keyword>
<keyword id="KW-0732">Signal</keyword>
<accession>C2M741</accession>
<reference key="1">
    <citation type="submission" date="2009-04" db="EMBL/GenBank/DDBJ databases">
        <authorList>
            <person name="Sebastian Y."/>
            <person name="Madupu R."/>
            <person name="Durkin A.S."/>
            <person name="Torralba M."/>
            <person name="Methe B."/>
            <person name="Sutton G.G."/>
            <person name="Strausberg R.L."/>
            <person name="Nelson K.E."/>
        </authorList>
    </citation>
    <scope>NUCLEOTIDE SEQUENCE [LARGE SCALE GENOMIC DNA]</scope>
    <source>
        <strain>ATCC 33624 / DSM 3290 / CIP 102945 / JCM 12953 / NCTC 12372 / 27</strain>
    </source>
</reference>
<reference key="2">
    <citation type="journal article" date="2013" name="Biochimie">
        <title>Discrimination based on Gly and Arg/Ser at position 673 between dipeptidyl-peptidase (DPP) 7 and DPP11, widely distributed DPPs in pathogenic and environmental gram-negative bacteria.</title>
        <authorList>
            <person name="Rouf S.M."/>
            <person name="Ohara-Nemoto Y."/>
            <person name="Hoshino T."/>
            <person name="Fujiwara T."/>
            <person name="Ono T."/>
            <person name="Nemoto T.K."/>
        </authorList>
    </citation>
    <scope>FUNCTION</scope>
    <scope>CATALYTIC ACTIVITY</scope>
    <scope>SUBSTRATE SPECIFICITY</scope>
    <source>
        <strain>ATCC 33624 / DSM 3290 / CIP 102945 / JCM 12953 / NCTC 12372 / 27</strain>
    </source>
</reference>
<sequence>MKRFFKMALFLGVSALYGQQGGMWIPSLLEGMNAKEMKTLGMKMTVADIYSVNKSSLKDAAPHFNGGCSSEVISDKGLLLTNHHCGYGQIQAHSTLQNDYLANGFWAKSLAEELPNKNLKVTFMVRIDDVTKQVLKGTESITDETEKAKLIEKNIAEVIKTAPKEAWQENSVKAFYDGNQYILFVTETFKDVRLVGAPPSSIGKFGSDTDNWVWPRHTGDFSLFRIYADKNNRPAEYSKDNVPYKPKHFFPISLKGVKEGDFVLVFGYPGTTQEYLPSAAVAQIENVINPARIGIRDIVLKVQDSYMRKDQGIKIKYAAKYARVANYWKKWMGETKGLKKSGAVALKQQQEAKFQQAIQKANKQAQYGNLLSDFNRLYKEIEPYTLAANLNSEFIFRNIDLLSNGSRLLQLEKALEDKGEQSFNDRKKNLLNTFKEIFKDNDKQVDKDVFEKVVVFYAANMPKNLLINSLKNFDAKKLADNLYNNSFLTSLSGVESVLNLSAAEFKERMKNDVGIQFVRELKEMNDTQVFPVYDRLNTQIHALQRTYMKAILEFSKPSDRIFPDANGTLRVTYGKVAGFSPADAVTYSAHTTLDGVMEKYVPGDYEFDVPQHLRDLQAKKDFGRYGDKNGKMPLCFLSTCHTTGGNSGSPAIDANGNLIGLNFDRVWEGTMSDIHYDPKLCRNIMVDIRYVLFVIDKYAGAGHLVNEMKLIK</sequence>
<organism>
    <name type="scientific">Capnocytophaga gingivalis</name>
    <dbReference type="NCBI Taxonomy" id="553178"/>
    <lineage>
        <taxon>Bacteria</taxon>
        <taxon>Pseudomonadati</taxon>
        <taxon>Bacteroidota</taxon>
        <taxon>Flavobacteriia</taxon>
        <taxon>Flavobacteriales</taxon>
        <taxon>Flavobacteriaceae</taxon>
        <taxon>Capnocytophaga</taxon>
    </lineage>
</organism>
<gene>
    <name type="primary">dpp11</name>
    <name evidence="7" type="ORF">CAPGI0001_1068</name>
</gene>
<evidence type="ECO:0000250" key="1">
    <source>
        <dbReference type="UniProtKB" id="B2RID1"/>
    </source>
</evidence>
<evidence type="ECO:0000250" key="2">
    <source>
        <dbReference type="UniProtKB" id="V5YM14"/>
    </source>
</evidence>
<evidence type="ECO:0000255" key="3"/>
<evidence type="ECO:0000269" key="4">
    <source>
    </source>
</evidence>
<evidence type="ECO:0000303" key="5">
    <source>
    </source>
</evidence>
<evidence type="ECO:0000305" key="6"/>
<evidence type="ECO:0000312" key="7">
    <source>
        <dbReference type="EMBL" id="EEK13929.1"/>
    </source>
</evidence>
<feature type="signal peptide" evidence="3">
    <location>
        <begin position="1"/>
        <end position="18"/>
    </location>
</feature>
<feature type="chain" id="PRO_0000435486" description="Asp/Glu-specific dipeptidyl-peptidase">
    <location>
        <begin position="19"/>
        <end position="712"/>
    </location>
</feature>
<feature type="active site" description="Charge relay system" evidence="2">
    <location>
        <position position="84"/>
    </location>
</feature>
<feature type="active site" description="Charge relay system" evidence="2">
    <location>
        <position position="220"/>
    </location>
</feature>
<feature type="active site" description="Charge relay system" evidence="2">
    <location>
        <position position="647"/>
    </location>
</feature>
<feature type="site" description="Is essential for the Asp/Glu P1 specificity of DPP11; involved in the recognition of the Asp/Glu residue at the P1 position of substrate peptides" evidence="1">
    <location>
        <position position="665"/>
    </location>
</feature>
<dbReference type="EC" id="3.4.14.-" evidence="4"/>
<dbReference type="EMBL" id="ACLQ01000023">
    <property type="protein sequence ID" value="EEK13929.1"/>
    <property type="molecule type" value="Genomic_DNA"/>
</dbReference>
<dbReference type="RefSeq" id="WP_002669328.1">
    <property type="nucleotide sequence ID" value="NZ_ACLQ01000023.1"/>
</dbReference>
<dbReference type="SMR" id="C2M741"/>
<dbReference type="STRING" id="553178.CAPGI0001_1068"/>
<dbReference type="MEROPS" id="S46.002"/>
<dbReference type="eggNOG" id="COG4717">
    <property type="taxonomic scope" value="Bacteria"/>
</dbReference>
<dbReference type="GO" id="GO:0008239">
    <property type="term" value="F:dipeptidyl-peptidase activity"/>
    <property type="evidence" value="ECO:0000314"/>
    <property type="project" value="UniProtKB"/>
</dbReference>
<dbReference type="GO" id="GO:0070009">
    <property type="term" value="F:serine-type aminopeptidase activity"/>
    <property type="evidence" value="ECO:0007669"/>
    <property type="project" value="InterPro"/>
</dbReference>
<dbReference type="GO" id="GO:0043171">
    <property type="term" value="P:peptide catabolic process"/>
    <property type="evidence" value="ECO:0000314"/>
    <property type="project" value="UniProtKB"/>
</dbReference>
<dbReference type="GO" id="GO:0006508">
    <property type="term" value="P:proteolysis"/>
    <property type="evidence" value="ECO:0007669"/>
    <property type="project" value="UniProtKB-KW"/>
</dbReference>
<dbReference type="Gene3D" id="2.40.10.10">
    <property type="entry name" value="Trypsin-like serine proteases"/>
    <property type="match status" value="1"/>
</dbReference>
<dbReference type="InterPro" id="IPR019500">
    <property type="entry name" value="Pep_S46"/>
</dbReference>
<dbReference type="InterPro" id="IPR009003">
    <property type="entry name" value="Peptidase_S1_PA"/>
</dbReference>
<dbReference type="InterPro" id="IPR043504">
    <property type="entry name" value="Peptidase_S1_PA_chymotrypsin"/>
</dbReference>
<dbReference type="PANTHER" id="PTHR38469">
    <property type="entry name" value="PERIPLASMIC PEPTIDASE SUBFAMILY S1B"/>
    <property type="match status" value="1"/>
</dbReference>
<dbReference type="PANTHER" id="PTHR38469:SF1">
    <property type="entry name" value="PERIPLASMIC PEPTIDASE SUBFAMILY S1B"/>
    <property type="match status" value="1"/>
</dbReference>
<dbReference type="Pfam" id="PF10459">
    <property type="entry name" value="Peptidase_S46"/>
    <property type="match status" value="1"/>
</dbReference>
<dbReference type="SUPFAM" id="SSF50494">
    <property type="entry name" value="Trypsin-like serine proteases"/>
    <property type="match status" value="1"/>
</dbReference>